<organism>
    <name type="scientific">Clostridium botulinum (strain 657 / Type Ba4)</name>
    <dbReference type="NCBI Taxonomy" id="515621"/>
    <lineage>
        <taxon>Bacteria</taxon>
        <taxon>Bacillati</taxon>
        <taxon>Bacillota</taxon>
        <taxon>Clostridia</taxon>
        <taxon>Eubacteriales</taxon>
        <taxon>Clostridiaceae</taxon>
        <taxon>Clostridium</taxon>
    </lineage>
</organism>
<comment type="function">
    <text evidence="1">Catalyzes a reversible aldol reaction between acetaldehyde and D-glyceraldehyde 3-phosphate to generate 2-deoxy-D-ribose 5-phosphate.</text>
</comment>
<comment type="catalytic activity">
    <reaction evidence="1">
        <text>2-deoxy-D-ribose 5-phosphate = D-glyceraldehyde 3-phosphate + acetaldehyde</text>
        <dbReference type="Rhea" id="RHEA:12821"/>
        <dbReference type="ChEBI" id="CHEBI:15343"/>
        <dbReference type="ChEBI" id="CHEBI:59776"/>
        <dbReference type="ChEBI" id="CHEBI:62877"/>
        <dbReference type="EC" id="4.1.2.4"/>
    </reaction>
</comment>
<comment type="pathway">
    <text evidence="1">Carbohydrate degradation; 2-deoxy-D-ribose 1-phosphate degradation; D-glyceraldehyde 3-phosphate and acetaldehyde from 2-deoxy-alpha-D-ribose 1-phosphate: step 2/2.</text>
</comment>
<comment type="subcellular location">
    <subcellularLocation>
        <location evidence="1">Cytoplasm</location>
    </subcellularLocation>
</comment>
<comment type="similarity">
    <text evidence="1">Belongs to the DeoC/FbaB aldolase family. DeoC type 1 subfamily.</text>
</comment>
<dbReference type="EC" id="4.1.2.4" evidence="1"/>
<dbReference type="EMBL" id="CP001083">
    <property type="protein sequence ID" value="ACQ54217.1"/>
    <property type="molecule type" value="Genomic_DNA"/>
</dbReference>
<dbReference type="RefSeq" id="WP_003360800.1">
    <property type="nucleotide sequence ID" value="NC_012658.1"/>
</dbReference>
<dbReference type="SMR" id="C3KVW7"/>
<dbReference type="KEGG" id="cbi:CLJ_B1670"/>
<dbReference type="HOGENOM" id="CLU_053595_0_1_9"/>
<dbReference type="UniPathway" id="UPA00002">
    <property type="reaction ID" value="UER00468"/>
</dbReference>
<dbReference type="Proteomes" id="UP000002333">
    <property type="component" value="Chromosome"/>
</dbReference>
<dbReference type="GO" id="GO:0005737">
    <property type="term" value="C:cytoplasm"/>
    <property type="evidence" value="ECO:0007669"/>
    <property type="project" value="UniProtKB-SubCell"/>
</dbReference>
<dbReference type="GO" id="GO:0004139">
    <property type="term" value="F:deoxyribose-phosphate aldolase activity"/>
    <property type="evidence" value="ECO:0007669"/>
    <property type="project" value="UniProtKB-UniRule"/>
</dbReference>
<dbReference type="GO" id="GO:0006018">
    <property type="term" value="P:2-deoxyribose 1-phosphate catabolic process"/>
    <property type="evidence" value="ECO:0007669"/>
    <property type="project" value="UniProtKB-UniRule"/>
</dbReference>
<dbReference type="GO" id="GO:0016052">
    <property type="term" value="P:carbohydrate catabolic process"/>
    <property type="evidence" value="ECO:0007669"/>
    <property type="project" value="TreeGrafter"/>
</dbReference>
<dbReference type="GO" id="GO:0009264">
    <property type="term" value="P:deoxyribonucleotide catabolic process"/>
    <property type="evidence" value="ECO:0007669"/>
    <property type="project" value="InterPro"/>
</dbReference>
<dbReference type="CDD" id="cd00959">
    <property type="entry name" value="DeoC"/>
    <property type="match status" value="1"/>
</dbReference>
<dbReference type="FunFam" id="3.20.20.70:FF:000044">
    <property type="entry name" value="Deoxyribose-phosphate aldolase"/>
    <property type="match status" value="1"/>
</dbReference>
<dbReference type="Gene3D" id="3.20.20.70">
    <property type="entry name" value="Aldolase class I"/>
    <property type="match status" value="1"/>
</dbReference>
<dbReference type="HAMAP" id="MF_00114">
    <property type="entry name" value="DeoC_type1"/>
    <property type="match status" value="1"/>
</dbReference>
<dbReference type="InterPro" id="IPR013785">
    <property type="entry name" value="Aldolase_TIM"/>
</dbReference>
<dbReference type="InterPro" id="IPR011343">
    <property type="entry name" value="DeoC"/>
</dbReference>
<dbReference type="InterPro" id="IPR002915">
    <property type="entry name" value="DeoC/FbaB/LacD_aldolase"/>
</dbReference>
<dbReference type="InterPro" id="IPR028581">
    <property type="entry name" value="DeoC_typeI"/>
</dbReference>
<dbReference type="NCBIfam" id="TIGR00126">
    <property type="entry name" value="deoC"/>
    <property type="match status" value="1"/>
</dbReference>
<dbReference type="PANTHER" id="PTHR10889">
    <property type="entry name" value="DEOXYRIBOSE-PHOSPHATE ALDOLASE"/>
    <property type="match status" value="1"/>
</dbReference>
<dbReference type="PANTHER" id="PTHR10889:SF1">
    <property type="entry name" value="DEOXYRIBOSE-PHOSPHATE ALDOLASE"/>
    <property type="match status" value="1"/>
</dbReference>
<dbReference type="Pfam" id="PF01791">
    <property type="entry name" value="DeoC"/>
    <property type="match status" value="1"/>
</dbReference>
<dbReference type="PIRSF" id="PIRSF001357">
    <property type="entry name" value="DeoC"/>
    <property type="match status" value="1"/>
</dbReference>
<dbReference type="SMART" id="SM01133">
    <property type="entry name" value="DeoC"/>
    <property type="match status" value="1"/>
</dbReference>
<dbReference type="SUPFAM" id="SSF51569">
    <property type="entry name" value="Aldolase"/>
    <property type="match status" value="1"/>
</dbReference>
<name>DEOC_CLOB6</name>
<feature type="chain" id="PRO_1000202962" description="Deoxyribose-phosphate aldolase">
    <location>
        <begin position="1"/>
        <end position="212"/>
    </location>
</feature>
<feature type="active site" description="Proton donor/acceptor" evidence="1">
    <location>
        <position position="89"/>
    </location>
</feature>
<feature type="active site" description="Schiff-base intermediate with acetaldehyde" evidence="1">
    <location>
        <position position="151"/>
    </location>
</feature>
<feature type="active site" description="Proton donor/acceptor" evidence="1">
    <location>
        <position position="180"/>
    </location>
</feature>
<reference key="1">
    <citation type="submission" date="2008-05" db="EMBL/GenBank/DDBJ databases">
        <title>Genome sequence of Clostridium botulinum Ba4 strain 657.</title>
        <authorList>
            <person name="Shrivastava S."/>
            <person name="Brown J.L."/>
            <person name="Bruce D."/>
            <person name="Detter C."/>
            <person name="Munk C."/>
            <person name="Smith L.A."/>
            <person name="Smith T.J."/>
            <person name="Sutton G."/>
            <person name="Brettin T.S."/>
        </authorList>
    </citation>
    <scope>NUCLEOTIDE SEQUENCE [LARGE SCALE GENOMIC DNA]</scope>
    <source>
        <strain>657 / Type Ba4</strain>
    </source>
</reference>
<accession>C3KVW7</accession>
<sequence>MKLSKYIDHTLLKPQATEKDILKLIEEAKTYDFASVCVNPSWVKLAYENLKDTDVKVCTVVGFPLGATSIASKVYETKVAIEDGADEIDMVIAVGQLKSGNDEYVKEEIKKIVEASRDKLVKVIIETCLLTEEEKVKACTLSKEAGADYVKTSTGFSTGGAKPEDIKLMRETVGKDMGVKASGGIHTREEMEVMIENGATRIGASCGVELVK</sequence>
<gene>
    <name evidence="1" type="primary">deoC</name>
    <name type="ordered locus">CLJ_B1670</name>
</gene>
<proteinExistence type="inferred from homology"/>
<evidence type="ECO:0000255" key="1">
    <source>
        <dbReference type="HAMAP-Rule" id="MF_00114"/>
    </source>
</evidence>
<protein>
    <recommendedName>
        <fullName evidence="1">Deoxyribose-phosphate aldolase</fullName>
        <shortName evidence="1">DERA</shortName>
        <ecNumber evidence="1">4.1.2.4</ecNumber>
    </recommendedName>
    <alternativeName>
        <fullName evidence="1">2-deoxy-D-ribose 5-phosphate aldolase</fullName>
    </alternativeName>
    <alternativeName>
        <fullName evidence="1">Phosphodeoxyriboaldolase</fullName>
        <shortName evidence="1">Deoxyriboaldolase</shortName>
    </alternativeName>
</protein>
<keyword id="KW-0963">Cytoplasm</keyword>
<keyword id="KW-0456">Lyase</keyword>
<keyword id="KW-0704">Schiff base</keyword>